<proteinExistence type="inferred from homology"/>
<name>DAPA_HELPJ</name>
<feature type="chain" id="PRO_0000103118" description="4-hydroxy-tetrahydrodipicolinate synthase">
    <location>
        <begin position="1"/>
        <end position="300"/>
    </location>
</feature>
<feature type="active site" description="Proton donor/acceptor" evidence="1">
    <location>
        <position position="140"/>
    </location>
</feature>
<feature type="active site" description="Schiff-base intermediate with substrate" evidence="1">
    <location>
        <position position="169"/>
    </location>
</feature>
<feature type="binding site" evidence="1">
    <location>
        <position position="45"/>
    </location>
    <ligand>
        <name>pyruvate</name>
        <dbReference type="ChEBI" id="CHEBI:15361"/>
    </ligand>
</feature>
<feature type="binding site" evidence="1">
    <location>
        <position position="210"/>
    </location>
    <ligand>
        <name>pyruvate</name>
        <dbReference type="ChEBI" id="CHEBI:15361"/>
    </ligand>
</feature>
<feature type="site" description="Part of a proton relay during catalysis" evidence="1">
    <location>
        <position position="44"/>
    </location>
</feature>
<feature type="site" description="Part of a proton relay during catalysis" evidence="1">
    <location>
        <position position="114"/>
    </location>
</feature>
<sequence length="300" mass="33224">MQFHSSSALITPFKKDLSVDEAAYETLIKRQIFQGMDACVPVGTTGESATLTHKEHMRCIEIAIETCKSTKTPSNSRMKVLAGVGSNATSESLSLAKFAQKIGADAILCVSPYYNRPTQQGLFEHYKTIAQSVEIPVMLYDVPSRTGVSIEVPTALKLFREVPNIKAIKEASGSLKRVTELHYYEKDFKIFSGEDSLNHSIMFSGGCGVISVTGNLMPNLISQMVNCALKFEYQQALEIQNKLFDLHQALFVETNPIPIKMAMHLAGLIENPSYRLPLVAPSKETIKLLEKTLQQYEVIA</sequence>
<accession>Q9ZM13</accession>
<dbReference type="EC" id="4.3.3.7" evidence="1"/>
<dbReference type="EMBL" id="AE001439">
    <property type="protein sequence ID" value="AAD05987.1"/>
    <property type="molecule type" value="Genomic_DNA"/>
</dbReference>
<dbReference type="PIR" id="C71935">
    <property type="entry name" value="C71935"/>
</dbReference>
<dbReference type="RefSeq" id="WP_001159559.1">
    <property type="nucleotide sequence ID" value="NZ_CP011330.1"/>
</dbReference>
<dbReference type="SMR" id="Q9ZM13"/>
<dbReference type="KEGG" id="hpj:jhp_0410"/>
<dbReference type="PATRIC" id="fig|85963.30.peg.600"/>
<dbReference type="eggNOG" id="COG0329">
    <property type="taxonomic scope" value="Bacteria"/>
</dbReference>
<dbReference type="UniPathway" id="UPA00034">
    <property type="reaction ID" value="UER00017"/>
</dbReference>
<dbReference type="Proteomes" id="UP000000804">
    <property type="component" value="Chromosome"/>
</dbReference>
<dbReference type="GO" id="GO:0005829">
    <property type="term" value="C:cytosol"/>
    <property type="evidence" value="ECO:0007669"/>
    <property type="project" value="TreeGrafter"/>
</dbReference>
<dbReference type="GO" id="GO:0008840">
    <property type="term" value="F:4-hydroxy-tetrahydrodipicolinate synthase activity"/>
    <property type="evidence" value="ECO:0007669"/>
    <property type="project" value="UniProtKB-UniRule"/>
</dbReference>
<dbReference type="GO" id="GO:0019877">
    <property type="term" value="P:diaminopimelate biosynthetic process"/>
    <property type="evidence" value="ECO:0007669"/>
    <property type="project" value="UniProtKB-UniRule"/>
</dbReference>
<dbReference type="GO" id="GO:0009089">
    <property type="term" value="P:lysine biosynthetic process via diaminopimelate"/>
    <property type="evidence" value="ECO:0007669"/>
    <property type="project" value="UniProtKB-UniRule"/>
</dbReference>
<dbReference type="CDD" id="cd00950">
    <property type="entry name" value="DHDPS"/>
    <property type="match status" value="1"/>
</dbReference>
<dbReference type="Gene3D" id="3.20.20.70">
    <property type="entry name" value="Aldolase class I"/>
    <property type="match status" value="1"/>
</dbReference>
<dbReference type="HAMAP" id="MF_00418">
    <property type="entry name" value="DapA"/>
    <property type="match status" value="1"/>
</dbReference>
<dbReference type="InterPro" id="IPR013785">
    <property type="entry name" value="Aldolase_TIM"/>
</dbReference>
<dbReference type="InterPro" id="IPR005263">
    <property type="entry name" value="DapA"/>
</dbReference>
<dbReference type="InterPro" id="IPR002220">
    <property type="entry name" value="DapA-like"/>
</dbReference>
<dbReference type="InterPro" id="IPR020625">
    <property type="entry name" value="Schiff_base-form_aldolases_AS"/>
</dbReference>
<dbReference type="NCBIfam" id="TIGR00674">
    <property type="entry name" value="dapA"/>
    <property type="match status" value="1"/>
</dbReference>
<dbReference type="PANTHER" id="PTHR12128:SF66">
    <property type="entry name" value="4-HYDROXY-2-OXOGLUTARATE ALDOLASE, MITOCHONDRIAL"/>
    <property type="match status" value="1"/>
</dbReference>
<dbReference type="PANTHER" id="PTHR12128">
    <property type="entry name" value="DIHYDRODIPICOLINATE SYNTHASE"/>
    <property type="match status" value="1"/>
</dbReference>
<dbReference type="Pfam" id="PF00701">
    <property type="entry name" value="DHDPS"/>
    <property type="match status" value="1"/>
</dbReference>
<dbReference type="PIRSF" id="PIRSF001365">
    <property type="entry name" value="DHDPS"/>
    <property type="match status" value="1"/>
</dbReference>
<dbReference type="PRINTS" id="PR00146">
    <property type="entry name" value="DHPICSNTHASE"/>
</dbReference>
<dbReference type="SMART" id="SM01130">
    <property type="entry name" value="DHDPS"/>
    <property type="match status" value="1"/>
</dbReference>
<dbReference type="SUPFAM" id="SSF51569">
    <property type="entry name" value="Aldolase"/>
    <property type="match status" value="1"/>
</dbReference>
<dbReference type="PROSITE" id="PS00666">
    <property type="entry name" value="DHDPS_2"/>
    <property type="match status" value="1"/>
</dbReference>
<keyword id="KW-0028">Amino-acid biosynthesis</keyword>
<keyword id="KW-0963">Cytoplasm</keyword>
<keyword id="KW-0220">Diaminopimelate biosynthesis</keyword>
<keyword id="KW-0456">Lyase</keyword>
<keyword id="KW-0457">Lysine biosynthesis</keyword>
<keyword id="KW-0704">Schiff base</keyword>
<protein>
    <recommendedName>
        <fullName evidence="1">4-hydroxy-tetrahydrodipicolinate synthase</fullName>
        <shortName evidence="1">HTPA synthase</shortName>
        <ecNumber evidence="1">4.3.3.7</ecNumber>
    </recommendedName>
</protein>
<evidence type="ECO:0000255" key="1">
    <source>
        <dbReference type="HAMAP-Rule" id="MF_00418"/>
    </source>
</evidence>
<evidence type="ECO:0000305" key="2"/>
<comment type="function">
    <text evidence="1">Catalyzes the condensation of (S)-aspartate-beta-semialdehyde [(S)-ASA] and pyruvate to 4-hydroxy-tetrahydrodipicolinate (HTPA).</text>
</comment>
<comment type="catalytic activity">
    <reaction evidence="1">
        <text>L-aspartate 4-semialdehyde + pyruvate = (2S,4S)-4-hydroxy-2,3,4,5-tetrahydrodipicolinate + H2O + H(+)</text>
        <dbReference type="Rhea" id="RHEA:34171"/>
        <dbReference type="ChEBI" id="CHEBI:15361"/>
        <dbReference type="ChEBI" id="CHEBI:15377"/>
        <dbReference type="ChEBI" id="CHEBI:15378"/>
        <dbReference type="ChEBI" id="CHEBI:67139"/>
        <dbReference type="ChEBI" id="CHEBI:537519"/>
        <dbReference type="EC" id="4.3.3.7"/>
    </reaction>
</comment>
<comment type="pathway">
    <text evidence="1">Amino-acid biosynthesis; L-lysine biosynthesis via DAP pathway; (S)-tetrahydrodipicolinate from L-aspartate: step 3/4.</text>
</comment>
<comment type="subunit">
    <text evidence="1">Homotetramer; dimer of dimers.</text>
</comment>
<comment type="subcellular location">
    <subcellularLocation>
        <location evidence="1">Cytoplasm</location>
    </subcellularLocation>
</comment>
<comment type="similarity">
    <text evidence="1">Belongs to the DapA family.</text>
</comment>
<comment type="caution">
    <text evidence="2">Was originally thought to be a dihydrodipicolinate synthase (DHDPS), catalyzing the condensation of (S)-aspartate-beta-semialdehyde [(S)-ASA] and pyruvate to dihydrodipicolinate (DHDP). However, it was shown in E.coli that the product of the enzymatic reaction is not dihydrodipicolinate but in fact (4S)-4-hydroxy-2,3,4,5-tetrahydro-(2S)-dipicolinic acid (HTPA), and that the consecutive dehydration reaction leading to DHDP is not spontaneous but catalyzed by DapB.</text>
</comment>
<organism>
    <name type="scientific">Helicobacter pylori (strain J99 / ATCC 700824)</name>
    <name type="common">Campylobacter pylori J99</name>
    <dbReference type="NCBI Taxonomy" id="85963"/>
    <lineage>
        <taxon>Bacteria</taxon>
        <taxon>Pseudomonadati</taxon>
        <taxon>Campylobacterota</taxon>
        <taxon>Epsilonproteobacteria</taxon>
        <taxon>Campylobacterales</taxon>
        <taxon>Helicobacteraceae</taxon>
        <taxon>Helicobacter</taxon>
    </lineage>
</organism>
<reference key="1">
    <citation type="journal article" date="1999" name="Nature">
        <title>Genomic sequence comparison of two unrelated isolates of the human gastric pathogen Helicobacter pylori.</title>
        <authorList>
            <person name="Alm R.A."/>
            <person name="Ling L.-S.L."/>
            <person name="Moir D.T."/>
            <person name="King B.L."/>
            <person name="Brown E.D."/>
            <person name="Doig P.C."/>
            <person name="Smith D.R."/>
            <person name="Noonan B."/>
            <person name="Guild B.C."/>
            <person name="deJonge B.L."/>
            <person name="Carmel G."/>
            <person name="Tummino P.J."/>
            <person name="Caruso A."/>
            <person name="Uria-Nickelsen M."/>
            <person name="Mills D.M."/>
            <person name="Ives C."/>
            <person name="Gibson R."/>
            <person name="Merberg D."/>
            <person name="Mills S.D."/>
            <person name="Jiang Q."/>
            <person name="Taylor D.E."/>
            <person name="Vovis G.F."/>
            <person name="Trust T.J."/>
        </authorList>
    </citation>
    <scope>NUCLEOTIDE SEQUENCE [LARGE SCALE GENOMIC DNA]</scope>
    <source>
        <strain>J99 / ATCC 700824</strain>
    </source>
</reference>
<gene>
    <name evidence="1" type="primary">dapA</name>
    <name type="ordered locus">jhp_0410</name>
</gene>